<proteinExistence type="evidence at protein level"/>
<accession>Q62234</accession>
<accession>Q546T8</accession>
<accession>Q6PAC0</accession>
<evidence type="ECO:0000250" key="1"/>
<evidence type="ECO:0000255" key="2">
    <source>
        <dbReference type="PROSITE-ProRule" id="PRU00316"/>
    </source>
</evidence>
<evidence type="ECO:0000256" key="3">
    <source>
        <dbReference type="SAM" id="MobiDB-lite"/>
    </source>
</evidence>
<evidence type="ECO:0000269" key="4">
    <source>
    </source>
</evidence>
<evidence type="ECO:0000269" key="5">
    <source>
    </source>
</evidence>
<evidence type="ECO:0000303" key="6">
    <source>
    </source>
</evidence>
<evidence type="ECO:0000305" key="7"/>
<evidence type="ECO:0007744" key="8">
    <source>
    </source>
</evidence>
<evidence type="ECO:0007829" key="9">
    <source>
        <dbReference type="PDB" id="2JTD"/>
    </source>
</evidence>
<evidence type="ECO:0007829" key="10">
    <source>
        <dbReference type="PDB" id="4V10"/>
    </source>
</evidence>
<dbReference type="EMBL" id="Z22866">
    <property type="protein sequence ID" value="CAA80488.1"/>
    <property type="molecule type" value="mRNA"/>
</dbReference>
<dbReference type="EMBL" id="AJ012072">
    <property type="protein sequence ID" value="CAB46494.1"/>
    <property type="molecule type" value="mRNA"/>
</dbReference>
<dbReference type="EMBL" id="AC154187">
    <property type="status" value="NOT_ANNOTATED_CDS"/>
    <property type="molecule type" value="Genomic_DNA"/>
</dbReference>
<dbReference type="EMBL" id="AC154218">
    <property type="status" value="NOT_ANNOTATED_CDS"/>
    <property type="molecule type" value="Genomic_DNA"/>
</dbReference>
<dbReference type="EMBL" id="AC154717">
    <property type="status" value="NOT_ANNOTATED_CDS"/>
    <property type="molecule type" value="Genomic_DNA"/>
</dbReference>
<dbReference type="EMBL" id="BC060378">
    <property type="protein sequence ID" value="AAH60378.1"/>
    <property type="molecule type" value="mRNA"/>
</dbReference>
<dbReference type="CCDS" id="CCDS37685.1">
    <molecule id="Q62234-1"/>
</dbReference>
<dbReference type="CCDS" id="CCDS50176.1">
    <molecule id="Q62234-2"/>
</dbReference>
<dbReference type="PIR" id="A48594">
    <property type="entry name" value="A48594"/>
</dbReference>
<dbReference type="RefSeq" id="NP_001077403.1">
    <molecule id="Q62234-2"/>
    <property type="nucleotide sequence ID" value="NM_001083934.2"/>
</dbReference>
<dbReference type="RefSeq" id="NP_034997.2">
    <molecule id="Q62234-1"/>
    <property type="nucleotide sequence ID" value="NM_010867.3"/>
</dbReference>
<dbReference type="PDB" id="2JTD">
    <property type="method" value="NMR"/>
    <property type="chains" value="A=1208-1329"/>
</dbReference>
<dbReference type="PDB" id="4V10">
    <property type="method" value="NMR"/>
    <property type="chains" value="A=1208-1434"/>
</dbReference>
<dbReference type="PDBsum" id="2JTD"/>
<dbReference type="PDBsum" id="4V10"/>
<dbReference type="SMR" id="Q62234"/>
<dbReference type="BioGRID" id="201675">
    <property type="interactions" value="11"/>
</dbReference>
<dbReference type="FunCoup" id="Q62234">
    <property type="interactions" value="101"/>
</dbReference>
<dbReference type="IntAct" id="Q62234">
    <property type="interactions" value="4"/>
</dbReference>
<dbReference type="MINT" id="Q62234"/>
<dbReference type="STRING" id="10090.ENSMUSP00000072945"/>
<dbReference type="GlyGen" id="Q62234">
    <property type="glycosylation" value="2 sites, 1 O-linked glycan (1 site)"/>
</dbReference>
<dbReference type="iPTMnet" id="Q62234"/>
<dbReference type="PhosphoSitePlus" id="Q62234"/>
<dbReference type="jPOST" id="Q62234"/>
<dbReference type="PaxDb" id="10090-ENSMUSP00000072945"/>
<dbReference type="PeptideAtlas" id="Q62234"/>
<dbReference type="ProteomicsDB" id="286114">
    <molecule id="Q62234-1"/>
</dbReference>
<dbReference type="ProteomicsDB" id="286115">
    <molecule id="Q62234-2"/>
</dbReference>
<dbReference type="Antibodypedia" id="2827">
    <property type="antibodies" value="167 antibodies from 28 providers"/>
</dbReference>
<dbReference type="DNASU" id="17929"/>
<dbReference type="Ensembl" id="ENSMUST00000073211.13">
    <molecule id="Q62234-1"/>
    <property type="protein sequence ID" value="ENSMUSP00000072945.6"/>
    <property type="gene ID" value="ENSMUSG00000024049.16"/>
</dbReference>
<dbReference type="Ensembl" id="ENSMUST00000179759.3">
    <molecule id="Q62234-2"/>
    <property type="protein sequence ID" value="ENSMUSP00000136266.2"/>
    <property type="gene ID" value="ENSMUSG00000024049.16"/>
</dbReference>
<dbReference type="GeneID" id="17929"/>
<dbReference type="KEGG" id="mmu:17929"/>
<dbReference type="UCSC" id="uc008dlx.1">
    <molecule id="Q62234-1"/>
    <property type="organism name" value="mouse"/>
</dbReference>
<dbReference type="UCSC" id="uc008dly.1">
    <molecule id="Q62234-2"/>
    <property type="organism name" value="mouse"/>
</dbReference>
<dbReference type="AGR" id="MGI:1341430"/>
<dbReference type="CTD" id="8736"/>
<dbReference type="MGI" id="MGI:1341430">
    <property type="gene designation" value="Myom1"/>
</dbReference>
<dbReference type="VEuPathDB" id="HostDB:ENSMUSG00000024049"/>
<dbReference type="eggNOG" id="ENOG502QTR4">
    <property type="taxonomic scope" value="Eukaryota"/>
</dbReference>
<dbReference type="GeneTree" id="ENSGT00940000154982"/>
<dbReference type="HOGENOM" id="CLU_004753_1_0_1"/>
<dbReference type="InParanoid" id="Q62234"/>
<dbReference type="OMA" id="ECVLLMF"/>
<dbReference type="OrthoDB" id="8776562at2759"/>
<dbReference type="PhylomeDB" id="Q62234"/>
<dbReference type="TreeFam" id="TF331825"/>
<dbReference type="BioGRID-ORCS" id="17929">
    <property type="hits" value="0 hits in 77 CRISPR screens"/>
</dbReference>
<dbReference type="ChiTaRS" id="Myom1">
    <property type="organism name" value="mouse"/>
</dbReference>
<dbReference type="EvolutionaryTrace" id="Q62234"/>
<dbReference type="PRO" id="PR:Q62234"/>
<dbReference type="Proteomes" id="UP000000589">
    <property type="component" value="Chromosome 17"/>
</dbReference>
<dbReference type="RNAct" id="Q62234">
    <property type="molecule type" value="protein"/>
</dbReference>
<dbReference type="Bgee" id="ENSMUSG00000024049">
    <property type="expression patterns" value="Expressed in triceps brachii and 174 other cell types or tissues"/>
</dbReference>
<dbReference type="ExpressionAtlas" id="Q62234">
    <property type="expression patterns" value="baseline and differential"/>
</dbReference>
<dbReference type="GO" id="GO:0005856">
    <property type="term" value="C:cytoskeleton"/>
    <property type="evidence" value="ECO:0000304"/>
    <property type="project" value="MGI"/>
</dbReference>
<dbReference type="GO" id="GO:0031430">
    <property type="term" value="C:M band"/>
    <property type="evidence" value="ECO:0000314"/>
    <property type="project" value="UniProtKB"/>
</dbReference>
<dbReference type="GO" id="GO:0032982">
    <property type="term" value="C:myosin filament"/>
    <property type="evidence" value="ECO:0007669"/>
    <property type="project" value="UniProtKB-KW"/>
</dbReference>
<dbReference type="GO" id="GO:0030017">
    <property type="term" value="C:sarcomere"/>
    <property type="evidence" value="ECO:0000314"/>
    <property type="project" value="MGI"/>
</dbReference>
<dbReference type="GO" id="GO:0019900">
    <property type="term" value="F:kinase binding"/>
    <property type="evidence" value="ECO:0007669"/>
    <property type="project" value="Ensembl"/>
</dbReference>
<dbReference type="GO" id="GO:0042803">
    <property type="term" value="F:protein homodimerization activity"/>
    <property type="evidence" value="ECO:0000314"/>
    <property type="project" value="UniProtKB"/>
</dbReference>
<dbReference type="GO" id="GO:0005200">
    <property type="term" value="F:structural constituent of cytoskeleton"/>
    <property type="evidence" value="ECO:0000304"/>
    <property type="project" value="MGI"/>
</dbReference>
<dbReference type="GO" id="GO:0002074">
    <property type="term" value="P:extraocular skeletal muscle development"/>
    <property type="evidence" value="ECO:0007669"/>
    <property type="project" value="Ensembl"/>
</dbReference>
<dbReference type="GO" id="GO:0006936">
    <property type="term" value="P:muscle contraction"/>
    <property type="evidence" value="ECO:0000304"/>
    <property type="project" value="MGI"/>
</dbReference>
<dbReference type="GO" id="GO:0010628">
    <property type="term" value="P:positive regulation of gene expression"/>
    <property type="evidence" value="ECO:0007669"/>
    <property type="project" value="Ensembl"/>
</dbReference>
<dbReference type="GO" id="GO:0050714">
    <property type="term" value="P:positive regulation of protein secretion"/>
    <property type="evidence" value="ECO:0007669"/>
    <property type="project" value="Ensembl"/>
</dbReference>
<dbReference type="GO" id="GO:0010737">
    <property type="term" value="P:protein kinase A signaling"/>
    <property type="evidence" value="ECO:0007669"/>
    <property type="project" value="Ensembl"/>
</dbReference>
<dbReference type="CDD" id="cd00063">
    <property type="entry name" value="FN3"/>
    <property type="match status" value="5"/>
</dbReference>
<dbReference type="CDD" id="cd00096">
    <property type="entry name" value="Ig"/>
    <property type="match status" value="1"/>
</dbReference>
<dbReference type="CDD" id="cd20951">
    <property type="entry name" value="IgI_titin_I1-like"/>
    <property type="match status" value="1"/>
</dbReference>
<dbReference type="FunFam" id="2.60.40.10:FF:000069">
    <property type="entry name" value="Alpha-protein kinase 3"/>
    <property type="match status" value="1"/>
</dbReference>
<dbReference type="FunFam" id="2.60.40.10:FF:000029">
    <property type="entry name" value="Myomesin 1"/>
    <property type="match status" value="1"/>
</dbReference>
<dbReference type="FunFam" id="2.60.40.10:FF:000124">
    <property type="entry name" value="Myomesin 1"/>
    <property type="match status" value="1"/>
</dbReference>
<dbReference type="FunFam" id="2.60.40.10:FF:000134">
    <property type="entry name" value="Myomesin 1"/>
    <property type="match status" value="1"/>
</dbReference>
<dbReference type="FunFam" id="2.60.40.10:FF:000192">
    <property type="entry name" value="Myomesin 1"/>
    <property type="match status" value="1"/>
</dbReference>
<dbReference type="FunFam" id="2.60.40.10:FF:000197">
    <property type="entry name" value="Myomesin 1"/>
    <property type="match status" value="1"/>
</dbReference>
<dbReference type="FunFam" id="2.60.40.10:FF:000222">
    <property type="entry name" value="Myomesin 1"/>
    <property type="match status" value="1"/>
</dbReference>
<dbReference type="FunFam" id="2.60.40.10:FF:000233">
    <property type="entry name" value="Myomesin 1"/>
    <property type="match status" value="1"/>
</dbReference>
<dbReference type="FunFam" id="2.60.40.10:FF:000467">
    <property type="entry name" value="Myomesin 1"/>
    <property type="match status" value="1"/>
</dbReference>
<dbReference type="FunFam" id="2.60.40.10:FF:002172">
    <property type="entry name" value="Myomesin 1a (skelemin)"/>
    <property type="match status" value="2"/>
</dbReference>
<dbReference type="FunFam" id="2.60.40.10:FF:000179">
    <property type="entry name" value="Myomesin 2"/>
    <property type="match status" value="1"/>
</dbReference>
<dbReference type="Gene3D" id="2.60.40.10">
    <property type="entry name" value="Immunoglobulins"/>
    <property type="match status" value="12"/>
</dbReference>
<dbReference type="InterPro" id="IPR003961">
    <property type="entry name" value="FN3_dom"/>
</dbReference>
<dbReference type="InterPro" id="IPR036116">
    <property type="entry name" value="FN3_sf"/>
</dbReference>
<dbReference type="InterPro" id="IPR007110">
    <property type="entry name" value="Ig-like_dom"/>
</dbReference>
<dbReference type="InterPro" id="IPR036179">
    <property type="entry name" value="Ig-like_dom_sf"/>
</dbReference>
<dbReference type="InterPro" id="IPR013783">
    <property type="entry name" value="Ig-like_fold"/>
</dbReference>
<dbReference type="InterPro" id="IPR013098">
    <property type="entry name" value="Ig_I-set"/>
</dbReference>
<dbReference type="InterPro" id="IPR003599">
    <property type="entry name" value="Ig_sub"/>
</dbReference>
<dbReference type="InterPro" id="IPR003598">
    <property type="entry name" value="Ig_sub2"/>
</dbReference>
<dbReference type="InterPro" id="IPR050964">
    <property type="entry name" value="Striated_Muscle_Regulatory"/>
</dbReference>
<dbReference type="PANTHER" id="PTHR13817:SF16">
    <property type="entry name" value="MYOMESIN-1"/>
    <property type="match status" value="1"/>
</dbReference>
<dbReference type="PANTHER" id="PTHR13817">
    <property type="entry name" value="TITIN"/>
    <property type="match status" value="1"/>
</dbReference>
<dbReference type="Pfam" id="PF00041">
    <property type="entry name" value="fn3"/>
    <property type="match status" value="5"/>
</dbReference>
<dbReference type="Pfam" id="PF07679">
    <property type="entry name" value="I-set"/>
    <property type="match status" value="5"/>
</dbReference>
<dbReference type="PRINTS" id="PR00014">
    <property type="entry name" value="FNTYPEIII"/>
</dbReference>
<dbReference type="SMART" id="SM00060">
    <property type="entry name" value="FN3"/>
    <property type="match status" value="5"/>
</dbReference>
<dbReference type="SMART" id="SM00409">
    <property type="entry name" value="IG"/>
    <property type="match status" value="7"/>
</dbReference>
<dbReference type="SMART" id="SM00408">
    <property type="entry name" value="IGc2"/>
    <property type="match status" value="5"/>
</dbReference>
<dbReference type="SUPFAM" id="SSF49265">
    <property type="entry name" value="Fibronectin type III"/>
    <property type="match status" value="3"/>
</dbReference>
<dbReference type="SUPFAM" id="SSF48726">
    <property type="entry name" value="Immunoglobulin"/>
    <property type="match status" value="7"/>
</dbReference>
<dbReference type="PROSITE" id="PS50853">
    <property type="entry name" value="FN3"/>
    <property type="match status" value="5"/>
</dbReference>
<dbReference type="PROSITE" id="PS50835">
    <property type="entry name" value="IG_LIKE"/>
    <property type="match status" value="5"/>
</dbReference>
<protein>
    <recommendedName>
        <fullName>Myomesin-1</fullName>
    </recommendedName>
    <alternativeName>
        <fullName>Myomesin family member 1</fullName>
    </alternativeName>
    <alternativeName>
        <fullName>Skelemin</fullName>
    </alternativeName>
</protein>
<comment type="function">
    <text>May link the intermediate filament cytoskeleton to the M-disk of the myofibrils in striated muscle. May also contact myosin filaments. Also binds beta-integrins.</text>
</comment>
<comment type="subunit">
    <text evidence="1">Homodimer. Interacts with TTN/titin and PNKD (By similarity).</text>
</comment>
<comment type="subcellular location">
    <subcellularLocation>
        <location evidence="4 5">Cytoplasm</location>
        <location evidence="4 5">Myofibril</location>
        <location evidence="4 5">Sarcomere</location>
        <location evidence="4 5">M line</location>
    </subcellularLocation>
</comment>
<comment type="alternative products">
    <event type="alternative splicing"/>
    <isoform>
        <id>Q62234-1</id>
        <name>1</name>
        <sequence type="displayed"/>
    </isoform>
    <isoform>
        <id>Q62234-2</id>
        <name>2</name>
        <sequence type="described" ref="VSP_035664"/>
    </isoform>
</comment>
<comment type="tissue specificity">
    <text evidence="4">Ubiquitously expressed in all striated muscles. Expressed in all fiber types.</text>
</comment>
<reference key="1">
    <citation type="journal article" date="1993" name="J. Biol. Chem.">
        <title>Skelemin, a cytoskeletal M-disc periphery protein, contains motifs of adhesion/recognition and intermediate filament proteins.</title>
        <authorList>
            <person name="Price M.G."/>
            <person name="Gomer R.H."/>
        </authorList>
    </citation>
    <scope>NUCLEOTIDE SEQUENCE [MRNA] (ISOFORM 1)</scope>
    <source>
        <strain>C57BL/10J</strain>
        <tissue>Muscle</tissue>
    </source>
</reference>
<reference key="2">
    <citation type="journal article" date="1999" name="Genomics">
        <title>M band proteins myomesin and skelemin are encoded by the same gene: analysis of its organization and expression.</title>
        <authorList>
            <person name="Steiner F."/>
            <person name="Weber K."/>
            <person name="Furst D.O."/>
        </authorList>
    </citation>
    <scope>NUCLEOTIDE SEQUENCE [MRNA] (ISOFORM 1)</scope>
</reference>
<reference key="3">
    <citation type="journal article" date="2009" name="PLoS Biol.">
        <title>Lineage-specific biology revealed by a finished genome assembly of the mouse.</title>
        <authorList>
            <person name="Church D.M."/>
            <person name="Goodstadt L."/>
            <person name="Hillier L.W."/>
            <person name="Zody M.C."/>
            <person name="Goldstein S."/>
            <person name="She X."/>
            <person name="Bult C.J."/>
            <person name="Agarwala R."/>
            <person name="Cherry J.L."/>
            <person name="DiCuccio M."/>
            <person name="Hlavina W."/>
            <person name="Kapustin Y."/>
            <person name="Meric P."/>
            <person name="Maglott D."/>
            <person name="Birtle Z."/>
            <person name="Marques A.C."/>
            <person name="Graves T."/>
            <person name="Zhou S."/>
            <person name="Teague B."/>
            <person name="Potamousis K."/>
            <person name="Churas C."/>
            <person name="Place M."/>
            <person name="Herschleb J."/>
            <person name="Runnheim R."/>
            <person name="Forrest D."/>
            <person name="Amos-Landgraf J."/>
            <person name="Schwartz D.C."/>
            <person name="Cheng Z."/>
            <person name="Lindblad-Toh K."/>
            <person name="Eichler E.E."/>
            <person name="Ponting C.P."/>
        </authorList>
    </citation>
    <scope>NUCLEOTIDE SEQUENCE [LARGE SCALE GENOMIC DNA]</scope>
    <source>
        <strain>C57BL/6J</strain>
    </source>
</reference>
<reference key="4">
    <citation type="journal article" date="2004" name="Genome Res.">
        <title>The status, quality, and expansion of the NIH full-length cDNA project: the Mammalian Gene Collection (MGC).</title>
        <authorList>
            <consortium name="The MGC Project Team"/>
        </authorList>
    </citation>
    <scope>NUCLEOTIDE SEQUENCE [LARGE SCALE MRNA] (ISOFORM 2)</scope>
    <source>
        <strain>NMRI</strain>
        <tissue>Mammary tumor</tissue>
    </source>
</reference>
<reference key="5">
    <citation type="journal article" date="1998" name="J. Biol. Chem.">
        <title>Identification of an interaction between the M-band protein skelemin and beta-integrin subunits. Colocalization of a skelemin-like protein with beta1- and beta3-integrins in non-muscle cells.</title>
        <authorList>
            <person name="Reddy K.B."/>
            <person name="Gascard P."/>
            <person name="Price M.G."/>
            <person name="Negrescu E.V."/>
            <person name="Fox J.E.B."/>
        </authorList>
    </citation>
    <scope>INTERACTION WITH BETA-INTEGRIN</scope>
</reference>
<reference key="6">
    <citation type="journal article" date="2008" name="J. Mol. Biol.">
        <title>Myomesin 3, a novel structural component of the M-band in striated muscle.</title>
        <authorList>
            <person name="Schoenauer R."/>
            <person name="Lange S."/>
            <person name="Hirschy A."/>
            <person name="Ehler E."/>
            <person name="Perriard J.C."/>
            <person name="Agarkova I."/>
        </authorList>
    </citation>
    <scope>SUBUNIT</scope>
    <scope>SUBCELLULAR LOCATION</scope>
    <scope>TISSUE SPECIFICITY</scope>
</reference>
<reference key="7">
    <citation type="journal article" date="2010" name="Cell">
        <title>A tissue-specific atlas of mouse protein phosphorylation and expression.</title>
        <authorList>
            <person name="Huttlin E.L."/>
            <person name="Jedrychowski M.P."/>
            <person name="Elias J.E."/>
            <person name="Goswami T."/>
            <person name="Rad R."/>
            <person name="Beausoleil S.A."/>
            <person name="Villen J."/>
            <person name="Haas W."/>
            <person name="Sowa M.E."/>
            <person name="Gygi S.P."/>
        </authorList>
    </citation>
    <scope>PHOSPHORYLATION [LARGE SCALE ANALYSIS] AT SER-124; SER-142; SER-863; SER-867 AND SER-1036</scope>
    <scope>IDENTIFICATION BY MASS SPECTROMETRY [LARGE SCALE ANALYSIS]</scope>
    <source>
        <tissue>Brown adipose tissue</tissue>
        <tissue>Heart</tissue>
        <tissue>Lung</tissue>
    </source>
</reference>
<reference key="8">
    <citation type="journal article" date="2012" name="Int. J. Dev. Biol.">
        <title>Sarcosin (Krp1) in skeletal muscle differentiation: gene expression profiling and knockdown experiments.</title>
        <authorList>
            <person name="du Puy L."/>
            <person name="Beqqali A."/>
            <person name="van Tol H.T."/>
            <person name="Monshouwer-Kloots J."/>
            <person name="Passier R."/>
            <person name="Haagsman H.P."/>
            <person name="Roelen B.A."/>
        </authorList>
    </citation>
    <scope>SUBCELLULAR LOCATION</scope>
</reference>
<organism>
    <name type="scientific">Mus musculus</name>
    <name type="common">Mouse</name>
    <dbReference type="NCBI Taxonomy" id="10090"/>
    <lineage>
        <taxon>Eukaryota</taxon>
        <taxon>Metazoa</taxon>
        <taxon>Chordata</taxon>
        <taxon>Craniata</taxon>
        <taxon>Vertebrata</taxon>
        <taxon>Euteleostomi</taxon>
        <taxon>Mammalia</taxon>
        <taxon>Eutheria</taxon>
        <taxon>Euarchontoglires</taxon>
        <taxon>Glires</taxon>
        <taxon>Rodentia</taxon>
        <taxon>Myomorpha</taxon>
        <taxon>Muroidea</taxon>
        <taxon>Muridae</taxon>
        <taxon>Murinae</taxon>
        <taxon>Mus</taxon>
        <taxon>Mus</taxon>
    </lineage>
</organism>
<sequence>MSLPFYQRSHQHYDLSYRNKDLRTTMSHYQQEKKRSAVYTHGSTAYSSRSLAARRQESEAFSQASATSYQQQASQTYSLGASSSSRHSQGSEVSRKTASAYDYGYSHGLTDSSLLLEDYSSKLSPQTKRAKRSLLSGEETGSLPGNYLVPIYSGRQVHISGIRDSEEERIKEAAAYIAQKTLLASEEAIAASKQSTASKQSATSKRTTSTLQREETFEKKSRNIAIREKAEELSLKKTLEETQTYHGKLNEDHLLHAPEFIIKPRSHTVWEKENVKLHCSVAGWPEPRLTWYKNQVPINVHANPGKYIIESRYGMHTLEISKCDFEDTAQYRASAMNVQGELSAYASVVVKRYKGELDESLLRGGVSMPLSFAVTPYGYASKFEIHFDDKFDVSFGREGETMSLGCRVVITPEIKHFQPEVQWYRNGAPVSPSKWVQPHWSGDRATLTFSHLNKEDEGLYTIRVRMGEYYEQYSAYVFVRDADAEIEGAPAAPLDVVSLDANKDYIIISWKQPAVDGGSPILGYFIDKCEVGTDTWSQCNDTPVKFARFPVTGLIEGRSYIFRVRAVNKTGIGLPSRVSEPVAALDPAEKARLKSHPSAPWTGQIIVTEEEPTEGVIPGPPTDLSVTEATRSYVVLSWKPPGQRGHEGIMYFVEKCDVGAENWQRVNTELPVKSPRFALFDLVEGKSYRFRVRCSNSAGVGEPSETTEVTVVGDKLDIPKAPGKIIPSRNTDTSVVVSWEESRDAKELVGYYIEASVVGSGKWEPCNNNPVKGSRFTCHGLTTAQSYIFRVRAVNAAGLSEYSQDSEAIEVKAAIGGGVSPDVWPQLSDTPGGLTDSRGGMNGASPPTSQKDALLGSNPNKPSPPSSPSSRGQKEVSTVSESVQEPLSSPPQEAAPEEEQSQSEPPKKKKDPVAVPSAPYDITCLESFRDSMVLGWKQPDTTGGAEITGYYVNYREVVGEVPGKWREANIKAVSDAAYKISNLKENTLYQFQVSAMNIAGLGAPSTVSECFKCEEWTIAVPGPPHSVKLSEVRKNSLVLQWKPPVYSGRTPVTGYFVDLKEASAKDDQWRGLNEAAIVNKYLRVQGLKEGTSYVFRVRAVNQAGVGKPSDLAGPVVAETRPGTKEVVVSVDDDGVISLNFECDQMTPKSEFVWSKDYVPTEDSPRLEVENKGDKTKMTFKDLGTDDLGTYSCDVTDTDGIASSYLIDEEEMKRLLALSQEHKFPTVPTKSELAVEILEKGQVRFWMQAEKLSSNAKVSYIFNEKEIFEGPKYKMHIDRNTGIIEMFMEKLQDEDEGTYTFQIQDGKATGHSTLVLIGDVYKKLQKEAEFQRQEWIRKQGPHFAEYLSWEVTGECNVLLKCKVANIKKETHIVWYKDEREISVDEKHDFKDGICTLLITEFSKKDAGFYEVILKDDRGKDKSRLKLVDEAFQDLMTEVCKKIALSATDLKIQSTAEGIRLYSFVCYYLDDLKVNWSHNGTGIKYTDRVKSGVTGEQIWLQINEPTPNDKGKYVMELFDGKTGHQKTVDLSGQAFDEAFAEFQRLKQAAIAEKNRARVLGGLPDVVTIQEGKALNLTCNVWGDPPPEVSWLKNEKPLTSDDHCSLKFEAGKTAFFTISGVSTADSGKYGLVVKNKYGSETSDFTVSVFIPEEELRKGAMEPPKGNQKSK</sequence>
<gene>
    <name type="primary">Myom1</name>
</gene>
<feature type="chain" id="PRO_0000072685" description="Myomesin-1">
    <location>
        <begin position="1"/>
        <end position="1667"/>
    </location>
</feature>
<feature type="domain" description="Ig-like C2-type 1">
    <location>
        <begin position="258"/>
        <end position="349"/>
    </location>
</feature>
<feature type="domain" description="Ig-like C2-type 2">
    <location>
        <begin position="376"/>
        <end position="478"/>
    </location>
</feature>
<feature type="domain" description="Fibronectin type-III 1" evidence="2">
    <location>
        <begin position="492"/>
        <end position="587"/>
    </location>
</feature>
<feature type="domain" description="Fibronectin type-III 2" evidence="2">
    <location>
        <begin position="620"/>
        <end position="714"/>
    </location>
</feature>
<feature type="domain" description="Fibronectin type-III 3" evidence="2">
    <location>
        <begin position="721"/>
        <end position="814"/>
    </location>
</feature>
<feature type="domain" description="Fibronectin type-III 4" evidence="2">
    <location>
        <begin position="918"/>
        <end position="1016"/>
    </location>
</feature>
<feature type="domain" description="Fibronectin type-III 5" evidence="2">
    <location>
        <begin position="1023"/>
        <end position="1122"/>
    </location>
</feature>
<feature type="domain" description="Ig-like C2-type 3">
    <location>
        <begin position="1114"/>
        <end position="1212"/>
    </location>
</feature>
<feature type="domain" description="Ig-like C2-type 4">
    <location>
        <begin position="1340"/>
        <end position="1426"/>
    </location>
</feature>
<feature type="domain" description="Ig-like C2-type 5">
    <location>
        <begin position="1555"/>
        <end position="1644"/>
    </location>
</feature>
<feature type="region of interest" description="Disordered" evidence="3">
    <location>
        <begin position="192"/>
        <end position="217"/>
    </location>
</feature>
<feature type="region of interest" description="Disordered" evidence="3">
    <location>
        <begin position="818"/>
        <end position="915"/>
    </location>
</feature>
<feature type="compositionally biased region" description="Low complexity" evidence="3">
    <location>
        <begin position="192"/>
        <end position="210"/>
    </location>
</feature>
<feature type="compositionally biased region" description="Low complexity" evidence="3">
    <location>
        <begin position="885"/>
        <end position="894"/>
    </location>
</feature>
<feature type="modified residue" description="Phosphoserine" evidence="8">
    <location>
        <position position="124"/>
    </location>
</feature>
<feature type="modified residue" description="Phosphoserine" evidence="8">
    <location>
        <position position="142"/>
    </location>
</feature>
<feature type="modified residue" description="Phosphoserine" evidence="8">
    <location>
        <position position="863"/>
    </location>
</feature>
<feature type="modified residue" description="Phosphoserine" evidence="8">
    <location>
        <position position="867"/>
    </location>
</feature>
<feature type="modified residue" description="Phosphoserine" evidence="8">
    <location>
        <position position="1036"/>
    </location>
</feature>
<feature type="splice variant" id="VSP_035664" description="In isoform 2." evidence="6">
    <location>
        <begin position="816"/>
        <end position="913"/>
    </location>
</feature>
<feature type="sequence conflict" description="In Ref. 1; CAA80488 and 2; CAB46494." evidence="7" ref="1 2">
    <original>SL</original>
    <variation>V</variation>
    <location>
        <begin position="133"/>
        <end position="134"/>
    </location>
</feature>
<feature type="sequence conflict" description="In Ref. 1; CAA80488 and 2; CAB46494." evidence="7" ref="1 2">
    <original>F</original>
    <variation>V</variation>
    <location>
        <position position="383"/>
    </location>
</feature>
<feature type="sequence conflict" description="In Ref. 1; CAA80488 and 2; CAB46494." evidence="7" ref="1 2">
    <original>S</original>
    <variation>C</variation>
    <location>
        <position position="1092"/>
    </location>
</feature>
<feature type="helix" evidence="9">
    <location>
        <begin position="1212"/>
        <end position="1216"/>
    </location>
</feature>
<feature type="strand" evidence="9">
    <location>
        <begin position="1227"/>
        <end position="1229"/>
    </location>
</feature>
<feature type="strand" evidence="9">
    <location>
        <begin position="1231"/>
        <end position="1237"/>
    </location>
</feature>
<feature type="turn" evidence="9">
    <location>
        <begin position="1238"/>
        <end position="1240"/>
    </location>
</feature>
<feature type="strand" evidence="9">
    <location>
        <begin position="1241"/>
        <end position="1247"/>
    </location>
</feature>
<feature type="strand" evidence="10">
    <location>
        <begin position="1252"/>
        <end position="1254"/>
    </location>
</feature>
<feature type="strand" evidence="9">
    <location>
        <begin position="1256"/>
        <end position="1261"/>
    </location>
</feature>
<feature type="strand" evidence="9">
    <location>
        <begin position="1268"/>
        <end position="1271"/>
    </location>
</feature>
<feature type="strand" evidence="9">
    <location>
        <begin position="1274"/>
        <end position="1276"/>
    </location>
</feature>
<feature type="strand" evidence="9">
    <location>
        <begin position="1278"/>
        <end position="1280"/>
    </location>
</feature>
<feature type="strand" evidence="9">
    <location>
        <begin position="1283"/>
        <end position="1287"/>
    </location>
</feature>
<feature type="turn" evidence="9">
    <location>
        <begin position="1292"/>
        <end position="1294"/>
    </location>
</feature>
<feature type="strand" evidence="9">
    <location>
        <begin position="1297"/>
        <end position="1304"/>
    </location>
</feature>
<feature type="strand" evidence="9">
    <location>
        <begin position="1307"/>
        <end position="1314"/>
    </location>
</feature>
<feature type="helix" evidence="9">
    <location>
        <begin position="1317"/>
        <end position="1327"/>
    </location>
</feature>
<feature type="helix" evidence="10">
    <location>
        <begin position="1333"/>
        <end position="1335"/>
    </location>
</feature>
<feature type="strand" evidence="10">
    <location>
        <begin position="1356"/>
        <end position="1359"/>
    </location>
</feature>
<feature type="strand" evidence="10">
    <location>
        <begin position="1373"/>
        <end position="1375"/>
    </location>
</feature>
<feature type="strand" evidence="10">
    <location>
        <begin position="1385"/>
        <end position="1387"/>
    </location>
</feature>
<feature type="strand" evidence="10">
    <location>
        <begin position="1394"/>
        <end position="1397"/>
    </location>
</feature>
<feature type="turn" evidence="10">
    <location>
        <begin position="1402"/>
        <end position="1404"/>
    </location>
</feature>
<feature type="strand" evidence="10">
    <location>
        <begin position="1406"/>
        <end position="1411"/>
    </location>
</feature>
<feature type="strand" evidence="10">
    <location>
        <begin position="1414"/>
        <end position="1417"/>
    </location>
</feature>
<feature type="strand" evidence="10">
    <location>
        <begin position="1423"/>
        <end position="1425"/>
    </location>
</feature>
<feature type="helix" evidence="10">
    <location>
        <begin position="1428"/>
        <end position="1431"/>
    </location>
</feature>
<keyword id="KW-0002">3D-structure</keyword>
<keyword id="KW-0025">Alternative splicing</keyword>
<keyword id="KW-0963">Cytoplasm</keyword>
<keyword id="KW-0393">Immunoglobulin domain</keyword>
<keyword id="KW-0514">Muscle protein</keyword>
<keyword id="KW-0597">Phosphoprotein</keyword>
<keyword id="KW-1185">Reference proteome</keyword>
<keyword id="KW-0677">Repeat</keyword>
<keyword id="KW-0787">Thick filament</keyword>
<name>MYOM1_MOUSE</name>